<sequence length="247" mass="28117">AGEDHGRGPYVQADLAYAYEHITRDYPDAAGANKGKISTVSDYFRNIRTHSIHPRVSVGYDFGGWRIAADYARYRKWHNNKYSVNIKELERKNNKTSGGDQLNIKYQKTEHQENGTFHAVSSLGLSTVYDFRVNDKFKPYIGVRVGYGHVRHGIDSTKKTKNTLTAYHGAGTKPTYYDDIDSGKNQKNTYRQNRSSRRLGFGAMAGVGIDVAPGLTLDAGYRYHYWGRLENTRFKTHEASLGVRYRF</sequence>
<evidence type="ECO:0000255" key="1"/>
<evidence type="ECO:0000305" key="2"/>
<comment type="function">
    <text>Implicated in a number of adherence functions. OPA proteins are implicated in pathogenesis and are subject to phase variation.</text>
</comment>
<comment type="subcellular location">
    <subcellularLocation>
        <location>Cell outer membrane</location>
    </subcellularLocation>
</comment>
<comment type="similarity">
    <text evidence="2">Belongs to the opacity porin family.</text>
</comment>
<dbReference type="EMBL" id="Z18929">
    <property type="protein sequence ID" value="CAA79362.1"/>
    <property type="molecule type" value="Genomic_DNA"/>
</dbReference>
<dbReference type="EMBL" id="X60710">
    <property type="protein sequence ID" value="CAA43120.1"/>
    <property type="molecule type" value="Genomic_DNA"/>
</dbReference>
<dbReference type="PIR" id="S36330">
    <property type="entry name" value="S28627"/>
</dbReference>
<dbReference type="SMR" id="Q04875"/>
<dbReference type="Reactome" id="R-HSA-202733">
    <property type="pathway name" value="Cell surface interactions at the vascular wall"/>
</dbReference>
<dbReference type="GO" id="GO:0009279">
    <property type="term" value="C:cell outer membrane"/>
    <property type="evidence" value="ECO:0000304"/>
    <property type="project" value="Reactome"/>
</dbReference>
<dbReference type="GO" id="GO:0015288">
    <property type="term" value="F:porin activity"/>
    <property type="evidence" value="ECO:0007669"/>
    <property type="project" value="InterPro"/>
</dbReference>
<dbReference type="FunFam" id="2.40.160.20:FF:000005">
    <property type="entry name" value="Opacity protein opA54"/>
    <property type="match status" value="1"/>
</dbReference>
<dbReference type="Gene3D" id="2.40.160.20">
    <property type="match status" value="1"/>
</dbReference>
<dbReference type="InterPro" id="IPR011250">
    <property type="entry name" value="OMP/PagP_b-brl"/>
</dbReference>
<dbReference type="InterPro" id="IPR003394">
    <property type="entry name" value="Porin_opacity"/>
</dbReference>
<dbReference type="Pfam" id="PF02462">
    <property type="entry name" value="Opacity"/>
    <property type="match status" value="1"/>
</dbReference>
<dbReference type="SUPFAM" id="SSF56925">
    <property type="entry name" value="OMPA-like"/>
    <property type="match status" value="1"/>
</dbReference>
<protein>
    <recommendedName>
        <fullName>Opacity protein opA52</fullName>
    </recommendedName>
    <alternativeName>
        <fullName>opA31</fullName>
    </alternativeName>
</protein>
<accession>Q04875</accession>
<reference key="1">
    <citation type="journal article" date="1993" name="EMBO J.">
        <title>Variable opacity (Opa) outer membrane proteins account for the cell tropisms displayed by Neisseria gonorrhoeae for human leukocytes and epithelial cells.</title>
        <authorList>
            <person name="Kupsch E.-M."/>
            <person name="Knepper B."/>
            <person name="Kuroki T."/>
            <person name="Heuer I."/>
            <person name="Meyer T.F."/>
        </authorList>
    </citation>
    <scope>NUCLEOTIDE SEQUENCE [GENOMIC DNA]</scope>
    <source>
        <strain>MS11 / F3</strain>
    </source>
</reference>
<reference key="2">
    <citation type="journal article" date="1991" name="Mol. Microbiol.">
        <title>The opacity proteins of Neisseria gonorrhoeae strain MS11 are encoded by a family of 11 complete genes.</title>
        <authorList>
            <person name="Bhat K.S."/>
            <person name="Gibbs C.P."/>
            <person name="Barrera O."/>
            <person name="Morrison S.G."/>
            <person name="Jaehnig F."/>
            <person name="Stern A."/>
            <person name="Kupsch E.-M."/>
            <person name="Meyer T.F."/>
            <person name="Swanson J."/>
        </authorList>
    </citation>
    <scope>NUCLEOTIDE SEQUENCE [GENOMIC DNA] OF 1-232</scope>
    <source>
        <strain>MS11 / V18</strain>
    </source>
</reference>
<reference key="3">
    <citation type="journal article" date="1992" name="Mol. Microbiol.">
        <authorList>
            <person name="Bhat K.S."/>
            <person name="Gibbs C.P."/>
            <person name="Barrera O."/>
            <person name="Morrison S.G."/>
            <person name="Jaehnig F."/>
            <person name="Stern S."/>
            <person name="Kupsch E.-M."/>
            <person name="Meyer T.F."/>
            <person name="Swanson J."/>
        </authorList>
    </citation>
    <scope>ERRATUM OF PUBMED:1815562</scope>
</reference>
<name>OPAG_NEIGO</name>
<organism>
    <name type="scientific">Neisseria gonorrhoeae</name>
    <dbReference type="NCBI Taxonomy" id="485"/>
    <lineage>
        <taxon>Bacteria</taxon>
        <taxon>Pseudomonadati</taxon>
        <taxon>Pseudomonadota</taxon>
        <taxon>Betaproteobacteria</taxon>
        <taxon>Neisseriales</taxon>
        <taxon>Neisseriaceae</taxon>
        <taxon>Neisseria</taxon>
    </lineage>
</organism>
<gene>
    <name type="primary">opaG</name>
</gene>
<keyword id="KW-0998">Cell outer membrane</keyword>
<keyword id="KW-0472">Membrane</keyword>
<keyword id="KW-0732">Signal</keyword>
<keyword id="KW-0812">Transmembrane</keyword>
<keyword id="KW-1134">Transmembrane beta strand</keyword>
<feature type="signal peptide" evidence="1">
    <location>
        <begin position="1" status="less than"/>
        <end position="1"/>
    </location>
</feature>
<feature type="chain" id="PRO_0000021911" description="Opacity protein opA52">
    <location>
        <begin position="2"/>
        <end position="247" status="greater than"/>
    </location>
</feature>
<feature type="non-terminal residue">
    <location>
        <position position="1"/>
    </location>
</feature>
<feature type="non-terminal residue">
    <location>
        <position position="247"/>
    </location>
</feature>
<proteinExistence type="inferred from homology"/>